<gene>
    <name evidence="1" type="primary">fabH</name>
    <name type="ordered locus">MW0865</name>
</gene>
<comment type="function">
    <text evidence="1">Catalyzes the condensation reaction of fatty acid synthesis by the addition to an acyl acceptor of two carbons from malonyl-ACP. Catalyzes the first condensation reaction which initiates fatty acid synthesis and may therefore play a role in governing the total rate of fatty acid production. Possesses both acetoacetyl-ACP synthase and acetyl transacylase activities. Its substrate specificity determines the biosynthesis of branched-chain and/or straight-chain of fatty acids.</text>
</comment>
<comment type="catalytic activity">
    <reaction evidence="1">
        <text>malonyl-[ACP] + acetyl-CoA + H(+) = 3-oxobutanoyl-[ACP] + CO2 + CoA</text>
        <dbReference type="Rhea" id="RHEA:12080"/>
        <dbReference type="Rhea" id="RHEA-COMP:9623"/>
        <dbReference type="Rhea" id="RHEA-COMP:9625"/>
        <dbReference type="ChEBI" id="CHEBI:15378"/>
        <dbReference type="ChEBI" id="CHEBI:16526"/>
        <dbReference type="ChEBI" id="CHEBI:57287"/>
        <dbReference type="ChEBI" id="CHEBI:57288"/>
        <dbReference type="ChEBI" id="CHEBI:78449"/>
        <dbReference type="ChEBI" id="CHEBI:78450"/>
        <dbReference type="EC" id="2.3.1.180"/>
    </reaction>
</comment>
<comment type="pathway">
    <text evidence="1">Lipid metabolism; fatty acid biosynthesis.</text>
</comment>
<comment type="subunit">
    <text evidence="1">Homodimer.</text>
</comment>
<comment type="subcellular location">
    <subcellularLocation>
        <location evidence="1">Cytoplasm</location>
    </subcellularLocation>
</comment>
<comment type="domain">
    <text evidence="1">The last Arg residue of the ACP-binding site is essential for the weak association between ACP/AcpP and FabH.</text>
</comment>
<comment type="similarity">
    <text evidence="1">Belongs to the thiolase-like superfamily. FabH family.</text>
</comment>
<keyword id="KW-0002">3D-structure</keyword>
<keyword id="KW-0012">Acyltransferase</keyword>
<keyword id="KW-0963">Cytoplasm</keyword>
<keyword id="KW-0275">Fatty acid biosynthesis</keyword>
<keyword id="KW-0276">Fatty acid metabolism</keyword>
<keyword id="KW-0444">Lipid biosynthesis</keyword>
<keyword id="KW-0443">Lipid metabolism</keyword>
<keyword id="KW-0511">Multifunctional enzyme</keyword>
<keyword id="KW-0808">Transferase</keyword>
<feature type="chain" id="PRO_0000110473" description="Beta-ketoacyl-[acyl-carrier-protein] synthase III">
    <location>
        <begin position="1"/>
        <end position="313"/>
    </location>
</feature>
<feature type="region of interest" description="ACP-binding" evidence="1">
    <location>
        <begin position="239"/>
        <end position="243"/>
    </location>
</feature>
<feature type="active site" evidence="1">
    <location>
        <position position="112"/>
    </location>
</feature>
<feature type="active site" evidence="1">
    <location>
        <position position="238"/>
    </location>
</feature>
<feature type="active site" evidence="1">
    <location>
        <position position="268"/>
    </location>
</feature>
<feature type="strand" evidence="2">
    <location>
        <begin position="3"/>
        <end position="11"/>
    </location>
</feature>
<feature type="strand" evidence="2">
    <location>
        <begin position="16"/>
        <end position="18"/>
    </location>
</feature>
<feature type="helix" evidence="2">
    <location>
        <begin position="19"/>
        <end position="24"/>
    </location>
</feature>
<feature type="helix" evidence="2">
    <location>
        <begin position="30"/>
        <end position="37"/>
    </location>
</feature>
<feature type="strand" evidence="2">
    <location>
        <begin position="40"/>
        <end position="43"/>
    </location>
</feature>
<feature type="helix" evidence="2">
    <location>
        <begin position="51"/>
        <end position="66"/>
    </location>
</feature>
<feature type="helix" evidence="2">
    <location>
        <begin position="70"/>
        <end position="72"/>
    </location>
</feature>
<feature type="strand" evidence="2">
    <location>
        <begin position="75"/>
        <end position="79"/>
    </location>
</feature>
<feature type="strand" evidence="2">
    <location>
        <begin position="86"/>
        <end position="88"/>
    </location>
</feature>
<feature type="helix" evidence="2">
    <location>
        <begin position="90"/>
        <end position="98"/>
    </location>
</feature>
<feature type="strand" evidence="2">
    <location>
        <begin position="105"/>
        <end position="109"/>
    </location>
</feature>
<feature type="helix" evidence="2">
    <location>
        <begin position="111"/>
        <end position="113"/>
    </location>
</feature>
<feature type="helix" evidence="2">
    <location>
        <begin position="114"/>
        <end position="127"/>
    </location>
</feature>
<feature type="strand" evidence="2">
    <location>
        <begin position="134"/>
        <end position="141"/>
    </location>
</feature>
<feature type="helix" evidence="2">
    <location>
        <begin position="142"/>
        <end position="144"/>
    </location>
</feature>
<feature type="helix" evidence="2">
    <location>
        <begin position="151"/>
        <end position="154"/>
    </location>
</feature>
<feature type="strand" evidence="2">
    <location>
        <begin position="159"/>
        <end position="168"/>
    </location>
</feature>
<feature type="strand" evidence="2">
    <location>
        <begin position="174"/>
        <end position="182"/>
    </location>
</feature>
<feature type="helix" evidence="2">
    <location>
        <begin position="184"/>
        <end position="189"/>
    </location>
</feature>
<feature type="strand" evidence="2">
    <location>
        <begin position="190"/>
        <end position="192"/>
    </location>
</feature>
<feature type="turn" evidence="2">
    <location>
        <begin position="194"/>
        <end position="196"/>
    </location>
</feature>
<feature type="strand" evidence="2">
    <location>
        <begin position="199"/>
        <end position="201"/>
    </location>
</feature>
<feature type="helix" evidence="2">
    <location>
        <begin position="203"/>
        <end position="224"/>
    </location>
</feature>
<feature type="helix" evidence="2">
    <location>
        <begin position="229"/>
        <end position="231"/>
    </location>
</feature>
<feature type="strand" evidence="2">
    <location>
        <begin position="233"/>
        <end position="237"/>
    </location>
</feature>
<feature type="helix" evidence="2">
    <location>
        <begin position="242"/>
        <end position="251"/>
    </location>
</feature>
<feature type="helix" evidence="2">
    <location>
        <begin position="256"/>
        <end position="258"/>
    </location>
</feature>
<feature type="helix" evidence="2">
    <location>
        <begin position="263"/>
        <end position="266"/>
    </location>
</feature>
<feature type="helix" evidence="2">
    <location>
        <begin position="270"/>
        <end position="272"/>
    </location>
</feature>
<feature type="helix" evidence="2">
    <location>
        <begin position="273"/>
        <end position="283"/>
    </location>
</feature>
<feature type="strand" evidence="2">
    <location>
        <begin position="292"/>
        <end position="299"/>
    </location>
</feature>
<feature type="turn" evidence="2">
    <location>
        <begin position="300"/>
        <end position="302"/>
    </location>
</feature>
<feature type="strand" evidence="2">
    <location>
        <begin position="303"/>
        <end position="310"/>
    </location>
</feature>
<accession>Q8NXE2</accession>
<protein>
    <recommendedName>
        <fullName evidence="1">Beta-ketoacyl-[acyl-carrier-protein] synthase III</fullName>
        <shortName evidence="1">Beta-ketoacyl-ACP synthase III</shortName>
        <shortName evidence="1">KAS III</shortName>
        <ecNumber evidence="1">2.3.1.180</ecNumber>
    </recommendedName>
    <alternativeName>
        <fullName evidence="1">3-oxoacyl-[acyl-carrier-protein] synthase 3</fullName>
    </alternativeName>
    <alternativeName>
        <fullName evidence="1">3-oxoacyl-[acyl-carrier-protein] synthase III</fullName>
    </alternativeName>
</protein>
<dbReference type="EC" id="2.3.1.180" evidence="1"/>
<dbReference type="EMBL" id="BA000033">
    <property type="protein sequence ID" value="BAB94730.1"/>
    <property type="molecule type" value="Genomic_DNA"/>
</dbReference>
<dbReference type="RefSeq" id="WP_001100525.1">
    <property type="nucleotide sequence ID" value="NC_003923.1"/>
</dbReference>
<dbReference type="PDB" id="1ZOW">
    <property type="method" value="X-ray"/>
    <property type="resolution" value="2.00 A"/>
    <property type="chains" value="A/B/C/D=1-313"/>
</dbReference>
<dbReference type="PDBsum" id="1ZOW"/>
<dbReference type="SMR" id="Q8NXE2"/>
<dbReference type="KEGG" id="sam:MW0865"/>
<dbReference type="HOGENOM" id="CLU_039592_3_1_9"/>
<dbReference type="UniPathway" id="UPA00094"/>
<dbReference type="EvolutionaryTrace" id="Q8NXE2"/>
<dbReference type="GO" id="GO:0005737">
    <property type="term" value="C:cytoplasm"/>
    <property type="evidence" value="ECO:0007669"/>
    <property type="project" value="UniProtKB-SubCell"/>
</dbReference>
<dbReference type="GO" id="GO:0004315">
    <property type="term" value="F:3-oxoacyl-[acyl-carrier-protein] synthase activity"/>
    <property type="evidence" value="ECO:0007669"/>
    <property type="project" value="InterPro"/>
</dbReference>
<dbReference type="GO" id="GO:0033818">
    <property type="term" value="F:beta-ketoacyl-acyl-carrier-protein synthase III activity"/>
    <property type="evidence" value="ECO:0007669"/>
    <property type="project" value="UniProtKB-UniRule"/>
</dbReference>
<dbReference type="GO" id="GO:0006633">
    <property type="term" value="P:fatty acid biosynthetic process"/>
    <property type="evidence" value="ECO:0007669"/>
    <property type="project" value="UniProtKB-UniRule"/>
</dbReference>
<dbReference type="CDD" id="cd00830">
    <property type="entry name" value="KAS_III"/>
    <property type="match status" value="1"/>
</dbReference>
<dbReference type="FunFam" id="3.40.47.10:FF:000004">
    <property type="entry name" value="3-oxoacyl-[acyl-carrier-protein] synthase 3"/>
    <property type="match status" value="1"/>
</dbReference>
<dbReference type="Gene3D" id="3.40.47.10">
    <property type="match status" value="1"/>
</dbReference>
<dbReference type="HAMAP" id="MF_01815">
    <property type="entry name" value="FabH"/>
    <property type="match status" value="1"/>
</dbReference>
<dbReference type="InterPro" id="IPR013747">
    <property type="entry name" value="ACP_syn_III_C"/>
</dbReference>
<dbReference type="InterPro" id="IPR013751">
    <property type="entry name" value="ACP_syn_III_N"/>
</dbReference>
<dbReference type="InterPro" id="IPR004655">
    <property type="entry name" value="FabH"/>
</dbReference>
<dbReference type="InterPro" id="IPR016039">
    <property type="entry name" value="Thiolase-like"/>
</dbReference>
<dbReference type="NCBIfam" id="TIGR00747">
    <property type="entry name" value="fabH"/>
    <property type="match status" value="1"/>
</dbReference>
<dbReference type="NCBIfam" id="NF006829">
    <property type="entry name" value="PRK09352.1"/>
    <property type="match status" value="1"/>
</dbReference>
<dbReference type="PANTHER" id="PTHR43091">
    <property type="entry name" value="3-OXOACYL-[ACYL-CARRIER-PROTEIN] SYNTHASE"/>
    <property type="match status" value="1"/>
</dbReference>
<dbReference type="PANTHER" id="PTHR43091:SF1">
    <property type="entry name" value="BETA-KETOACYL-[ACYL-CARRIER-PROTEIN] SYNTHASE III, CHLOROPLASTIC"/>
    <property type="match status" value="1"/>
</dbReference>
<dbReference type="Pfam" id="PF08545">
    <property type="entry name" value="ACP_syn_III"/>
    <property type="match status" value="1"/>
</dbReference>
<dbReference type="Pfam" id="PF08541">
    <property type="entry name" value="ACP_syn_III_C"/>
    <property type="match status" value="1"/>
</dbReference>
<dbReference type="SUPFAM" id="SSF53901">
    <property type="entry name" value="Thiolase-like"/>
    <property type="match status" value="1"/>
</dbReference>
<reference key="1">
    <citation type="journal article" date="2002" name="Lancet">
        <title>Genome and virulence determinants of high virulence community-acquired MRSA.</title>
        <authorList>
            <person name="Baba T."/>
            <person name="Takeuchi F."/>
            <person name="Kuroda M."/>
            <person name="Yuzawa H."/>
            <person name="Aoki K."/>
            <person name="Oguchi A."/>
            <person name="Nagai Y."/>
            <person name="Iwama N."/>
            <person name="Asano K."/>
            <person name="Naimi T."/>
            <person name="Kuroda H."/>
            <person name="Cui L."/>
            <person name="Yamamoto K."/>
            <person name="Hiramatsu K."/>
        </authorList>
    </citation>
    <scope>NUCLEOTIDE SEQUENCE [LARGE SCALE GENOMIC DNA]</scope>
    <source>
        <strain>MW2</strain>
    </source>
</reference>
<name>FABH_STAAW</name>
<organism>
    <name type="scientific">Staphylococcus aureus (strain MW2)</name>
    <dbReference type="NCBI Taxonomy" id="196620"/>
    <lineage>
        <taxon>Bacteria</taxon>
        <taxon>Bacillati</taxon>
        <taxon>Bacillota</taxon>
        <taxon>Bacilli</taxon>
        <taxon>Bacillales</taxon>
        <taxon>Staphylococcaceae</taxon>
        <taxon>Staphylococcus</taxon>
    </lineage>
</organism>
<sequence length="313" mass="33879">MNVGIKGFGAYAPEKIIDNAYFEQFLDTSDEWISKMTGIKERHWADDDQDTSDLAYEASLKAIADAGIQPEDIDMIIVATATGDMPFPTVANMLQERLGTGKVASMDQLAACSGFMYSMITAKQYVQSGDYHNILVVGADKLSKITDLTDRSTAVLFGDGAGAVIIGEVSDGRGIISYEMGSDGTGGKHLYLDKDTGKLKMNGREVFKFAVRIMGDASTRVVEKANLTSDDIDLFIPHQANIRIMESARERLGISKDKMSVSVNKYGNTSAASIPLSIDQELKNGKIKDDDTIVLVGFGGGLTWGAMTIKWGK</sequence>
<proteinExistence type="evidence at protein level"/>
<evidence type="ECO:0000255" key="1">
    <source>
        <dbReference type="HAMAP-Rule" id="MF_01815"/>
    </source>
</evidence>
<evidence type="ECO:0007829" key="2">
    <source>
        <dbReference type="PDB" id="1ZOW"/>
    </source>
</evidence>